<sequence>MSYSVLEALRNSPDVVRKVLTARRMDASLVDKFLELDEKWRRLKKEVDELRHEYNKLSKEGAKAPPERRREIADKARELAARLERAEKELEETERAREEVLWSFPNLIHESVPICPEGVDSIPVRHWGVVKTTKDVVDKLDKGVDYLVVEKAPVGHADMAEVVLKMADTLKAGEVAGSRFYYLFDDLVWLDFALAMYALDYLAQKGFRPVIPPYMLKYDLIRRVLDFDTFKDAIYKIDGEDLYLIATAEHGIAAYLYKRELLEEELPQLYVGWSPCFRKEAGAGSRDIKGIFRVHIFHKVEQFVFSLPEDSWKWHEEITKNTEELIRGLGLPYRVVNICAHDLGAPAAKKYDIEVWYPSQGMYRELASCSNVTDWQSYRLGIRVTRKGMKREYVHTLNCTGLATTRTITAILENFQREDGAVEIPKVLRQYLEPIKAAPKDYILPKAAKSP</sequence>
<proteinExistence type="inferred from homology"/>
<keyword id="KW-0030">Aminoacyl-tRNA synthetase</keyword>
<keyword id="KW-0067">ATP-binding</keyword>
<keyword id="KW-0963">Cytoplasm</keyword>
<keyword id="KW-0436">Ligase</keyword>
<keyword id="KW-0547">Nucleotide-binding</keyword>
<keyword id="KW-0648">Protein biosynthesis</keyword>
<keyword id="KW-1185">Reference proteome</keyword>
<reference key="1">
    <citation type="journal article" date="2002" name="Proc. Natl. Acad. Sci. U.S.A.">
        <title>Genome sequence of the hyperthermophilic crenarchaeon Pyrobaculum aerophilum.</title>
        <authorList>
            <person name="Fitz-Gibbon S.T."/>
            <person name="Ladner H."/>
            <person name="Kim U.-J."/>
            <person name="Stetter K.O."/>
            <person name="Simon M.I."/>
            <person name="Miller J.H."/>
        </authorList>
    </citation>
    <scope>NUCLEOTIDE SEQUENCE [LARGE SCALE GENOMIC DNA]</scope>
    <source>
        <strain>ATCC 51768 / DSM 7523 / JCM 9630 / CIP 104966 / NBRC 100827 / IM2</strain>
    </source>
</reference>
<protein>
    <recommendedName>
        <fullName evidence="1">Serine--tRNA ligase</fullName>
        <ecNumber evidence="1">6.1.1.11</ecNumber>
    </recommendedName>
    <alternativeName>
        <fullName evidence="1">Seryl-tRNA synthetase</fullName>
        <shortName evidence="1">SerRS</shortName>
    </alternativeName>
    <alternativeName>
        <fullName evidence="1">Seryl-tRNA(Ser/Sec) synthetase</fullName>
    </alternativeName>
</protein>
<name>SYS_PYRAE</name>
<dbReference type="EC" id="6.1.1.11" evidence="1"/>
<dbReference type="EMBL" id="AE009441">
    <property type="protein sequence ID" value="AAL64715.1"/>
    <property type="molecule type" value="Genomic_DNA"/>
</dbReference>
<dbReference type="RefSeq" id="WP_011009183.1">
    <property type="nucleotide sequence ID" value="NC_003364.1"/>
</dbReference>
<dbReference type="SMR" id="Q8ZTP4"/>
<dbReference type="FunCoup" id="Q8ZTP4">
    <property type="interactions" value="246"/>
</dbReference>
<dbReference type="STRING" id="178306.PAE3158"/>
<dbReference type="EnsemblBacteria" id="AAL64715">
    <property type="protein sequence ID" value="AAL64715"/>
    <property type="gene ID" value="PAE3158"/>
</dbReference>
<dbReference type="GeneID" id="1463894"/>
<dbReference type="KEGG" id="pai:PAE3158"/>
<dbReference type="PATRIC" id="fig|178306.9.peg.2375"/>
<dbReference type="eggNOG" id="arCOG00403">
    <property type="taxonomic scope" value="Archaea"/>
</dbReference>
<dbReference type="HOGENOM" id="CLU_023797_0_1_2"/>
<dbReference type="InParanoid" id="Q8ZTP4"/>
<dbReference type="UniPathway" id="UPA00906">
    <property type="reaction ID" value="UER00895"/>
</dbReference>
<dbReference type="Proteomes" id="UP000002439">
    <property type="component" value="Chromosome"/>
</dbReference>
<dbReference type="GO" id="GO:0005829">
    <property type="term" value="C:cytosol"/>
    <property type="evidence" value="ECO:0000318"/>
    <property type="project" value="GO_Central"/>
</dbReference>
<dbReference type="GO" id="GO:0005524">
    <property type="term" value="F:ATP binding"/>
    <property type="evidence" value="ECO:0007669"/>
    <property type="project" value="UniProtKB-UniRule"/>
</dbReference>
<dbReference type="GO" id="GO:0004828">
    <property type="term" value="F:serine-tRNA ligase activity"/>
    <property type="evidence" value="ECO:0000318"/>
    <property type="project" value="GO_Central"/>
</dbReference>
<dbReference type="GO" id="GO:0000049">
    <property type="term" value="F:tRNA binding"/>
    <property type="evidence" value="ECO:0000318"/>
    <property type="project" value="GO_Central"/>
</dbReference>
<dbReference type="GO" id="GO:0016260">
    <property type="term" value="P:selenocysteine biosynthetic process"/>
    <property type="evidence" value="ECO:0007669"/>
    <property type="project" value="UniProtKB-UniRule"/>
</dbReference>
<dbReference type="GO" id="GO:0006434">
    <property type="term" value="P:seryl-tRNA aminoacylation"/>
    <property type="evidence" value="ECO:0000318"/>
    <property type="project" value="GO_Central"/>
</dbReference>
<dbReference type="CDD" id="cd00770">
    <property type="entry name" value="SerRS_core"/>
    <property type="match status" value="1"/>
</dbReference>
<dbReference type="Gene3D" id="3.30.930.10">
    <property type="entry name" value="Bira Bifunctional Protein, Domain 2"/>
    <property type="match status" value="1"/>
</dbReference>
<dbReference type="Gene3D" id="1.10.287.40">
    <property type="entry name" value="Serine-tRNA synthetase, tRNA binding domain"/>
    <property type="match status" value="1"/>
</dbReference>
<dbReference type="HAMAP" id="MF_00176">
    <property type="entry name" value="Ser_tRNA_synth_type1"/>
    <property type="match status" value="1"/>
</dbReference>
<dbReference type="InterPro" id="IPR002314">
    <property type="entry name" value="aa-tRNA-synt_IIb"/>
</dbReference>
<dbReference type="InterPro" id="IPR006195">
    <property type="entry name" value="aa-tRNA-synth_II"/>
</dbReference>
<dbReference type="InterPro" id="IPR045864">
    <property type="entry name" value="aa-tRNA-synth_II/BPL/LPL"/>
</dbReference>
<dbReference type="InterPro" id="IPR002317">
    <property type="entry name" value="Ser-tRNA-ligase_type_1"/>
</dbReference>
<dbReference type="InterPro" id="IPR015866">
    <property type="entry name" value="Ser-tRNA-synth_1_N"/>
</dbReference>
<dbReference type="InterPro" id="IPR042103">
    <property type="entry name" value="SerRS_1_N_sf"/>
</dbReference>
<dbReference type="InterPro" id="IPR033729">
    <property type="entry name" value="SerRS_core"/>
</dbReference>
<dbReference type="InterPro" id="IPR010978">
    <property type="entry name" value="tRNA-bd_arm"/>
</dbReference>
<dbReference type="NCBIfam" id="TIGR00414">
    <property type="entry name" value="serS"/>
    <property type="match status" value="1"/>
</dbReference>
<dbReference type="PANTHER" id="PTHR11778">
    <property type="entry name" value="SERYL-TRNA SYNTHETASE"/>
    <property type="match status" value="1"/>
</dbReference>
<dbReference type="Pfam" id="PF02403">
    <property type="entry name" value="Seryl_tRNA_N"/>
    <property type="match status" value="1"/>
</dbReference>
<dbReference type="Pfam" id="PF00587">
    <property type="entry name" value="tRNA-synt_2b"/>
    <property type="match status" value="1"/>
</dbReference>
<dbReference type="PIRSF" id="PIRSF001529">
    <property type="entry name" value="Ser-tRNA-synth_IIa"/>
    <property type="match status" value="1"/>
</dbReference>
<dbReference type="PRINTS" id="PR00981">
    <property type="entry name" value="TRNASYNTHSER"/>
</dbReference>
<dbReference type="SUPFAM" id="SSF55681">
    <property type="entry name" value="Class II aaRS and biotin synthetases"/>
    <property type="match status" value="1"/>
</dbReference>
<dbReference type="SUPFAM" id="SSF46589">
    <property type="entry name" value="tRNA-binding arm"/>
    <property type="match status" value="1"/>
</dbReference>
<dbReference type="PROSITE" id="PS50862">
    <property type="entry name" value="AA_TRNA_LIGASE_II"/>
    <property type="match status" value="1"/>
</dbReference>
<gene>
    <name evidence="1" type="primary">serS</name>
    <name type="ordered locus">PAE3158</name>
</gene>
<evidence type="ECO:0000255" key="1">
    <source>
        <dbReference type="HAMAP-Rule" id="MF_00176"/>
    </source>
</evidence>
<accession>Q8ZTP4</accession>
<feature type="chain" id="PRO_0000122180" description="Serine--tRNA ligase">
    <location>
        <begin position="1"/>
        <end position="451"/>
    </location>
</feature>
<feature type="binding site" evidence="1">
    <location>
        <begin position="247"/>
        <end position="249"/>
    </location>
    <ligand>
        <name>L-serine</name>
        <dbReference type="ChEBI" id="CHEBI:33384"/>
    </ligand>
</feature>
<feature type="binding site" evidence="1">
    <location>
        <begin position="278"/>
        <end position="280"/>
    </location>
    <ligand>
        <name>ATP</name>
        <dbReference type="ChEBI" id="CHEBI:30616"/>
    </ligand>
</feature>
<feature type="binding site" evidence="1">
    <location>
        <position position="294"/>
    </location>
    <ligand>
        <name>ATP</name>
        <dbReference type="ChEBI" id="CHEBI:30616"/>
    </ligand>
</feature>
<feature type="binding site" evidence="1">
    <location>
        <position position="301"/>
    </location>
    <ligand>
        <name>L-serine</name>
        <dbReference type="ChEBI" id="CHEBI:33384"/>
    </ligand>
</feature>
<feature type="binding site" evidence="1">
    <location>
        <begin position="365"/>
        <end position="368"/>
    </location>
    <ligand>
        <name>ATP</name>
        <dbReference type="ChEBI" id="CHEBI:30616"/>
    </ligand>
</feature>
<feature type="binding site" evidence="1">
    <location>
        <position position="400"/>
    </location>
    <ligand>
        <name>L-serine</name>
        <dbReference type="ChEBI" id="CHEBI:33384"/>
    </ligand>
</feature>
<organism>
    <name type="scientific">Pyrobaculum aerophilum (strain ATCC 51768 / DSM 7523 / JCM 9630 / CIP 104966 / NBRC 100827 / IM2)</name>
    <dbReference type="NCBI Taxonomy" id="178306"/>
    <lineage>
        <taxon>Archaea</taxon>
        <taxon>Thermoproteota</taxon>
        <taxon>Thermoprotei</taxon>
        <taxon>Thermoproteales</taxon>
        <taxon>Thermoproteaceae</taxon>
        <taxon>Pyrobaculum</taxon>
    </lineage>
</organism>
<comment type="function">
    <text evidence="1">Catalyzes the attachment of serine to tRNA(Ser). Is also able to aminoacylate tRNA(Sec) with serine, to form the misacylated tRNA L-seryl-tRNA(Sec), which will be further converted into selenocysteinyl-tRNA(Sec).</text>
</comment>
<comment type="catalytic activity">
    <reaction evidence="1">
        <text>tRNA(Ser) + L-serine + ATP = L-seryl-tRNA(Ser) + AMP + diphosphate + H(+)</text>
        <dbReference type="Rhea" id="RHEA:12292"/>
        <dbReference type="Rhea" id="RHEA-COMP:9669"/>
        <dbReference type="Rhea" id="RHEA-COMP:9703"/>
        <dbReference type="ChEBI" id="CHEBI:15378"/>
        <dbReference type="ChEBI" id="CHEBI:30616"/>
        <dbReference type="ChEBI" id="CHEBI:33019"/>
        <dbReference type="ChEBI" id="CHEBI:33384"/>
        <dbReference type="ChEBI" id="CHEBI:78442"/>
        <dbReference type="ChEBI" id="CHEBI:78533"/>
        <dbReference type="ChEBI" id="CHEBI:456215"/>
        <dbReference type="EC" id="6.1.1.11"/>
    </reaction>
</comment>
<comment type="catalytic activity">
    <reaction evidence="1">
        <text>tRNA(Sec) + L-serine + ATP = L-seryl-tRNA(Sec) + AMP + diphosphate + H(+)</text>
        <dbReference type="Rhea" id="RHEA:42580"/>
        <dbReference type="Rhea" id="RHEA-COMP:9742"/>
        <dbReference type="Rhea" id="RHEA-COMP:10128"/>
        <dbReference type="ChEBI" id="CHEBI:15378"/>
        <dbReference type="ChEBI" id="CHEBI:30616"/>
        <dbReference type="ChEBI" id="CHEBI:33019"/>
        <dbReference type="ChEBI" id="CHEBI:33384"/>
        <dbReference type="ChEBI" id="CHEBI:78442"/>
        <dbReference type="ChEBI" id="CHEBI:78533"/>
        <dbReference type="ChEBI" id="CHEBI:456215"/>
        <dbReference type="EC" id="6.1.1.11"/>
    </reaction>
</comment>
<comment type="pathway">
    <text evidence="1">Aminoacyl-tRNA biosynthesis; selenocysteinyl-tRNA(Sec) biosynthesis; L-seryl-tRNA(Sec) from L-serine and tRNA(Sec): step 1/1.</text>
</comment>
<comment type="subunit">
    <text evidence="1">Homodimer. The tRNA molecule binds across the dimer.</text>
</comment>
<comment type="subcellular location">
    <subcellularLocation>
        <location evidence="1">Cytoplasm</location>
    </subcellularLocation>
</comment>
<comment type="domain">
    <text evidence="1">Consists of two distinct domains, a catalytic core and a N-terminal extension that is involved in tRNA binding.</text>
</comment>
<comment type="similarity">
    <text evidence="1">Belongs to the class-II aminoacyl-tRNA synthetase family. Type-1 seryl-tRNA synthetase subfamily.</text>
</comment>